<name>CH60_STAA3</name>
<feature type="chain" id="PRO_0000256993" description="Chaperonin GroEL">
    <location>
        <begin position="1"/>
        <end position="538"/>
    </location>
</feature>
<feature type="binding site" evidence="1">
    <location>
        <begin position="29"/>
        <end position="32"/>
    </location>
    <ligand>
        <name>ATP</name>
        <dbReference type="ChEBI" id="CHEBI:30616"/>
    </ligand>
</feature>
<feature type="binding site" evidence="1">
    <location>
        <begin position="86"/>
        <end position="90"/>
    </location>
    <ligand>
        <name>ATP</name>
        <dbReference type="ChEBI" id="CHEBI:30616"/>
    </ligand>
</feature>
<feature type="binding site" evidence="1">
    <location>
        <position position="413"/>
    </location>
    <ligand>
        <name>ATP</name>
        <dbReference type="ChEBI" id="CHEBI:30616"/>
    </ligand>
</feature>
<feature type="binding site" evidence="1">
    <location>
        <begin position="476"/>
        <end position="478"/>
    </location>
    <ligand>
        <name>ATP</name>
        <dbReference type="ChEBI" id="CHEBI:30616"/>
    </ligand>
</feature>
<feature type="binding site" evidence="1">
    <location>
        <position position="492"/>
    </location>
    <ligand>
        <name>ATP</name>
        <dbReference type="ChEBI" id="CHEBI:30616"/>
    </ligand>
</feature>
<comment type="function">
    <text evidence="1">Together with its co-chaperonin GroES, plays an essential role in assisting protein folding. The GroEL-GroES system forms a nano-cage that allows encapsulation of the non-native substrate proteins and provides a physical environment optimized to promote and accelerate protein folding.</text>
</comment>
<comment type="catalytic activity">
    <reaction evidence="1">
        <text>ATP + H2O + a folded polypeptide = ADP + phosphate + an unfolded polypeptide.</text>
        <dbReference type="EC" id="5.6.1.7"/>
    </reaction>
</comment>
<comment type="subunit">
    <text evidence="1">Forms a cylinder of 14 subunits composed of two heptameric rings stacked back-to-back. Interacts with the co-chaperonin GroES.</text>
</comment>
<comment type="subcellular location">
    <subcellularLocation>
        <location evidence="1">Cytoplasm</location>
    </subcellularLocation>
</comment>
<comment type="similarity">
    <text evidence="1">Belongs to the chaperonin (HSP60) family.</text>
</comment>
<reference key="1">
    <citation type="journal article" date="2006" name="Lancet">
        <title>Complete genome sequence of USA300, an epidemic clone of community-acquired meticillin-resistant Staphylococcus aureus.</title>
        <authorList>
            <person name="Diep B.A."/>
            <person name="Gill S.R."/>
            <person name="Chang R.F."/>
            <person name="Phan T.H."/>
            <person name="Chen J.H."/>
            <person name="Davidson M.G."/>
            <person name="Lin F."/>
            <person name="Lin J."/>
            <person name="Carleton H.A."/>
            <person name="Mongodin E.F."/>
            <person name="Sensabaugh G.F."/>
            <person name="Perdreau-Remington F."/>
        </authorList>
    </citation>
    <scope>NUCLEOTIDE SEQUENCE [LARGE SCALE GENOMIC DNA]</scope>
    <source>
        <strain>USA300</strain>
    </source>
</reference>
<keyword id="KW-0067">ATP-binding</keyword>
<keyword id="KW-0143">Chaperone</keyword>
<keyword id="KW-0963">Cytoplasm</keyword>
<keyword id="KW-0413">Isomerase</keyword>
<keyword id="KW-0547">Nucleotide-binding</keyword>
<proteinExistence type="inferred from homology"/>
<protein>
    <recommendedName>
        <fullName evidence="1">Chaperonin GroEL</fullName>
        <ecNumber evidence="1">5.6.1.7</ecNumber>
    </recommendedName>
    <alternativeName>
        <fullName evidence="1">60 kDa chaperonin</fullName>
    </alternativeName>
    <alternativeName>
        <fullName evidence="1">Chaperonin-60</fullName>
        <shortName evidence="1">Cpn60</shortName>
    </alternativeName>
</protein>
<organism>
    <name type="scientific">Staphylococcus aureus (strain USA300)</name>
    <dbReference type="NCBI Taxonomy" id="367830"/>
    <lineage>
        <taxon>Bacteria</taxon>
        <taxon>Bacillati</taxon>
        <taxon>Bacillota</taxon>
        <taxon>Bacilli</taxon>
        <taxon>Bacillales</taxon>
        <taxon>Staphylococcaceae</taxon>
        <taxon>Staphylococcus</taxon>
    </lineage>
</organism>
<dbReference type="EC" id="5.6.1.7" evidence="1"/>
<dbReference type="EMBL" id="CP000255">
    <property type="protein sequence ID" value="ABD21188.1"/>
    <property type="molecule type" value="Genomic_DNA"/>
</dbReference>
<dbReference type="RefSeq" id="WP_000240645.1">
    <property type="nucleotide sequence ID" value="NZ_CP027476.1"/>
</dbReference>
<dbReference type="SMR" id="Q2FF95"/>
<dbReference type="KEGG" id="saa:SAUSA300_1982"/>
<dbReference type="HOGENOM" id="CLU_016503_3_0_9"/>
<dbReference type="OMA" id="TDTDKME"/>
<dbReference type="Proteomes" id="UP000001939">
    <property type="component" value="Chromosome"/>
</dbReference>
<dbReference type="GO" id="GO:0005737">
    <property type="term" value="C:cytoplasm"/>
    <property type="evidence" value="ECO:0007669"/>
    <property type="project" value="UniProtKB-SubCell"/>
</dbReference>
<dbReference type="GO" id="GO:0005524">
    <property type="term" value="F:ATP binding"/>
    <property type="evidence" value="ECO:0007669"/>
    <property type="project" value="UniProtKB-UniRule"/>
</dbReference>
<dbReference type="GO" id="GO:0140662">
    <property type="term" value="F:ATP-dependent protein folding chaperone"/>
    <property type="evidence" value="ECO:0007669"/>
    <property type="project" value="InterPro"/>
</dbReference>
<dbReference type="GO" id="GO:0016853">
    <property type="term" value="F:isomerase activity"/>
    <property type="evidence" value="ECO:0007669"/>
    <property type="project" value="UniProtKB-KW"/>
</dbReference>
<dbReference type="GO" id="GO:0051082">
    <property type="term" value="F:unfolded protein binding"/>
    <property type="evidence" value="ECO:0007669"/>
    <property type="project" value="UniProtKB-UniRule"/>
</dbReference>
<dbReference type="GO" id="GO:0042026">
    <property type="term" value="P:protein refolding"/>
    <property type="evidence" value="ECO:0007669"/>
    <property type="project" value="UniProtKB-UniRule"/>
</dbReference>
<dbReference type="CDD" id="cd03344">
    <property type="entry name" value="GroEL"/>
    <property type="match status" value="1"/>
</dbReference>
<dbReference type="FunFam" id="1.10.560.10:FF:000001">
    <property type="entry name" value="60 kDa chaperonin"/>
    <property type="match status" value="1"/>
</dbReference>
<dbReference type="FunFam" id="3.50.7.10:FF:000001">
    <property type="entry name" value="60 kDa chaperonin"/>
    <property type="match status" value="1"/>
</dbReference>
<dbReference type="Gene3D" id="3.50.7.10">
    <property type="entry name" value="GroEL"/>
    <property type="match status" value="1"/>
</dbReference>
<dbReference type="Gene3D" id="1.10.560.10">
    <property type="entry name" value="GroEL-like equatorial domain"/>
    <property type="match status" value="1"/>
</dbReference>
<dbReference type="Gene3D" id="3.30.260.10">
    <property type="entry name" value="TCP-1-like chaperonin intermediate domain"/>
    <property type="match status" value="1"/>
</dbReference>
<dbReference type="HAMAP" id="MF_00600">
    <property type="entry name" value="CH60"/>
    <property type="match status" value="1"/>
</dbReference>
<dbReference type="InterPro" id="IPR018370">
    <property type="entry name" value="Chaperonin_Cpn60_CS"/>
</dbReference>
<dbReference type="InterPro" id="IPR001844">
    <property type="entry name" value="Cpn60/GroEL"/>
</dbReference>
<dbReference type="InterPro" id="IPR002423">
    <property type="entry name" value="Cpn60/GroEL/TCP-1"/>
</dbReference>
<dbReference type="InterPro" id="IPR027409">
    <property type="entry name" value="GroEL-like_apical_dom_sf"/>
</dbReference>
<dbReference type="InterPro" id="IPR027413">
    <property type="entry name" value="GROEL-like_equatorial_sf"/>
</dbReference>
<dbReference type="InterPro" id="IPR027410">
    <property type="entry name" value="TCP-1-like_intermed_sf"/>
</dbReference>
<dbReference type="NCBIfam" id="TIGR02348">
    <property type="entry name" value="GroEL"/>
    <property type="match status" value="1"/>
</dbReference>
<dbReference type="NCBIfam" id="NF000592">
    <property type="entry name" value="PRK00013.1"/>
    <property type="match status" value="1"/>
</dbReference>
<dbReference type="NCBIfam" id="NF009487">
    <property type="entry name" value="PRK12849.1"/>
    <property type="match status" value="1"/>
</dbReference>
<dbReference type="NCBIfam" id="NF009488">
    <property type="entry name" value="PRK12850.1"/>
    <property type="match status" value="1"/>
</dbReference>
<dbReference type="NCBIfam" id="NF009489">
    <property type="entry name" value="PRK12851.1"/>
    <property type="match status" value="1"/>
</dbReference>
<dbReference type="PANTHER" id="PTHR45633">
    <property type="entry name" value="60 KDA HEAT SHOCK PROTEIN, MITOCHONDRIAL"/>
    <property type="match status" value="1"/>
</dbReference>
<dbReference type="Pfam" id="PF00118">
    <property type="entry name" value="Cpn60_TCP1"/>
    <property type="match status" value="1"/>
</dbReference>
<dbReference type="PRINTS" id="PR00298">
    <property type="entry name" value="CHAPERONIN60"/>
</dbReference>
<dbReference type="SUPFAM" id="SSF52029">
    <property type="entry name" value="GroEL apical domain-like"/>
    <property type="match status" value="1"/>
</dbReference>
<dbReference type="SUPFAM" id="SSF48592">
    <property type="entry name" value="GroEL equatorial domain-like"/>
    <property type="match status" value="1"/>
</dbReference>
<dbReference type="SUPFAM" id="SSF54849">
    <property type="entry name" value="GroEL-intermediate domain like"/>
    <property type="match status" value="1"/>
</dbReference>
<dbReference type="PROSITE" id="PS00296">
    <property type="entry name" value="CHAPERONINS_CPN60"/>
    <property type="match status" value="1"/>
</dbReference>
<sequence length="538" mass="57630">MVKQLKFSEDARQAMLRGVDQLANAVKVTIGPKGRNVVLDKEFTAPLITNDGVTIAKEIELEDPYENMGAKLVQEVANKTNEIAGDGTTTATVLAQAMIQEGLKNVTSGANPVGLRQGIDKAVKVAVEALHENSQKVENKNEIAQVGAISAADEEIGRYISEAMEKVGNDGVITIEESNGLNTELEVVEGMQFDRGYQSPYMVTDSDKMVAELERPYILVTDKKISSFQDILPLLEQVVQSNRPILIVADEVEGDALTNIVLNRMRGTFTAVAVKAPGFGDRRKAMLEDLAILTGAQVITDDLGLDLKDASIDMLGTASKVEVTKDNTTVVDGDGDENSIDARVSQLKSQIEETESDFDREKLQERLAKLAGGVAVIKVGAASETELKERKLRIEDALNSTRAAVEEGIVAGGGTALVNVYQKVSEIEAEGDIETGVNIVLKALTAPVRQIAENAGLEGSVIVERLKNAEPGVGFNAATNEWVNMLEEGIVDPTKVTRSALQHAASVAAMFLTTEAVVASIPEKNNDQPNMGGMPGMM</sequence>
<accession>Q2FF95</accession>
<evidence type="ECO:0000255" key="1">
    <source>
        <dbReference type="HAMAP-Rule" id="MF_00600"/>
    </source>
</evidence>
<gene>
    <name evidence="1" type="primary">groEL</name>
    <name evidence="1" type="synonym">groL</name>
    <name type="ordered locus">SAUSA300_1982</name>
</gene>